<protein>
    <recommendedName>
        <fullName>Gamma-crystallin A</fullName>
    </recommendedName>
    <alternativeName>
        <fullName>Gamma-A-crystallin</fullName>
    </alternativeName>
    <alternativeName>
        <fullName>Gamma-crystallin 4</fullName>
    </alternativeName>
</protein>
<sequence>MGKITFYEDRGFQGRCYECSSDCPNLQTYFSRCNSIRVDSGCWMLYERPNYQGYQYFLRRGDYPDYQQWMGFSDSIRSCRSIPYTSSHRIRLYERDDYRGLVSELMDDCSCIHDRFRLHEIYSMHVLEGCWVLYEMPNYRGRQYLLRPGDYRRYHDWGAMDAKVGSLRRVMDLY</sequence>
<proteinExistence type="evidence at transcript level"/>
<reference key="1">
    <citation type="journal article" date="1984" name="Proc. Natl. Acad. Sci. U.S.A.">
        <title>Gamma-crystallin family of the mouse lens: structural and evolutionary relationships.</title>
        <authorList>
            <person name="Breitman M.L."/>
            <person name="Lok S."/>
            <person name="Wistow G."/>
            <person name="Piatigorsky J."/>
            <person name="Treton J.A."/>
            <person name="Gold R.J.M."/>
            <person name="Tsui L.-C."/>
        </authorList>
    </citation>
    <scope>NUCLEOTIDE SEQUENCE [GENOMIC DNA]</scope>
</reference>
<reference key="2">
    <citation type="journal article" date="1984" name="Nucleic Acids Res.">
        <title>Analysis of the mouse gamma-crystallin gene family: assignment of multiple cDNAs to discrete genomic sequences and characterization of a representative gene.</title>
        <authorList>
            <person name="Lok S."/>
            <person name="Tsui L.-C."/>
            <person name="Shinohara T."/>
            <person name="Piatigorsky J."/>
            <person name="Gold R."/>
            <person name="Breitman M.L."/>
        </authorList>
    </citation>
    <scope>NUCLEOTIDE SEQUENCE [GENOMIC DNA]</scope>
</reference>
<reference key="3">
    <citation type="journal article" date="2004" name="Genome Res.">
        <title>The status, quality, and expansion of the NIH full-length cDNA project: the Mammalian Gene Collection (MGC).</title>
        <authorList>
            <consortium name="The MGC Project Team"/>
        </authorList>
    </citation>
    <scope>NUCLEOTIDE SEQUENCE [LARGE SCALE MRNA]</scope>
    <source>
        <strain>C57BL/6J</strain>
        <tissue>Brain</tissue>
    </source>
</reference>
<evidence type="ECO:0000255" key="1">
    <source>
        <dbReference type="PROSITE-ProRule" id="PRU00028"/>
    </source>
</evidence>
<evidence type="ECO:0000305" key="2"/>
<organism>
    <name type="scientific">Mus musculus</name>
    <name type="common">Mouse</name>
    <dbReference type="NCBI Taxonomy" id="10090"/>
    <lineage>
        <taxon>Eukaryota</taxon>
        <taxon>Metazoa</taxon>
        <taxon>Chordata</taxon>
        <taxon>Craniata</taxon>
        <taxon>Vertebrata</taxon>
        <taxon>Euteleostomi</taxon>
        <taxon>Mammalia</taxon>
        <taxon>Eutheria</taxon>
        <taxon>Euarchontoglires</taxon>
        <taxon>Glires</taxon>
        <taxon>Rodentia</taxon>
        <taxon>Myomorpha</taxon>
        <taxon>Muroidea</taxon>
        <taxon>Muridae</taxon>
        <taxon>Murinae</taxon>
        <taxon>Mus</taxon>
        <taxon>Mus</taxon>
    </lineage>
</organism>
<gene>
    <name type="primary">Cryga</name>
</gene>
<dbReference type="EMBL" id="X00635">
    <property type="protein sequence ID" value="CAA25266.1"/>
    <property type="molecule type" value="Genomic_DNA"/>
</dbReference>
<dbReference type="EMBL" id="X00654">
    <property type="protein sequence ID" value="CAA25275.1"/>
    <property type="molecule type" value="Genomic_DNA"/>
</dbReference>
<dbReference type="EMBL" id="BC056430">
    <property type="protein sequence ID" value="AAH56430.1"/>
    <property type="molecule type" value="mRNA"/>
</dbReference>
<dbReference type="CCDS" id="CCDS15014.1"/>
<dbReference type="PIR" id="A02935">
    <property type="entry name" value="CYMSG4"/>
</dbReference>
<dbReference type="PIR" id="I48353">
    <property type="entry name" value="I48353"/>
</dbReference>
<dbReference type="RefSeq" id="NP_031800.1">
    <property type="nucleotide sequence ID" value="NM_007774.4"/>
</dbReference>
<dbReference type="SMR" id="P04345"/>
<dbReference type="FunCoup" id="P04345">
    <property type="interactions" value="2"/>
</dbReference>
<dbReference type="STRING" id="10090.ENSMUSP00000058548"/>
<dbReference type="PaxDb" id="10090-ENSMUSP00000058548"/>
<dbReference type="ProteomicsDB" id="283954"/>
<dbReference type="Antibodypedia" id="54429">
    <property type="antibodies" value="20 antibodies from 12 providers"/>
</dbReference>
<dbReference type="DNASU" id="12964"/>
<dbReference type="Ensembl" id="ENSMUST00000061497.9">
    <property type="protein sequence ID" value="ENSMUSP00000058548.9"/>
    <property type="gene ID" value="ENSMUSG00000044429.9"/>
</dbReference>
<dbReference type="GeneID" id="12964"/>
<dbReference type="KEGG" id="mmu:12964"/>
<dbReference type="UCSC" id="uc007bhk.1">
    <property type="organism name" value="mouse"/>
</dbReference>
<dbReference type="AGR" id="MGI:88521"/>
<dbReference type="CTD" id="1418"/>
<dbReference type="MGI" id="MGI:88521">
    <property type="gene designation" value="Cryga"/>
</dbReference>
<dbReference type="VEuPathDB" id="HostDB:ENSMUSG00000044429"/>
<dbReference type="eggNOG" id="ENOG502RXJY">
    <property type="taxonomic scope" value="Eukaryota"/>
</dbReference>
<dbReference type="GeneTree" id="ENSGT00940000156190"/>
<dbReference type="HOGENOM" id="CLU_081883_1_1_1"/>
<dbReference type="InParanoid" id="P04345"/>
<dbReference type="OMA" id="HEIHSLH"/>
<dbReference type="OrthoDB" id="8407241at2759"/>
<dbReference type="PhylomeDB" id="P04345"/>
<dbReference type="BioGRID-ORCS" id="12964">
    <property type="hits" value="1 hit in 78 CRISPR screens"/>
</dbReference>
<dbReference type="ChiTaRS" id="Cryga">
    <property type="organism name" value="mouse"/>
</dbReference>
<dbReference type="PRO" id="PR:P04345"/>
<dbReference type="Proteomes" id="UP000000589">
    <property type="component" value="Chromosome 1"/>
</dbReference>
<dbReference type="RNAct" id="P04345">
    <property type="molecule type" value="protein"/>
</dbReference>
<dbReference type="Bgee" id="ENSMUSG00000044429">
    <property type="expression patterns" value="Expressed in lens of camera-type eye and 16 other cell types or tissues"/>
</dbReference>
<dbReference type="GO" id="GO:0005212">
    <property type="term" value="F:structural constituent of eye lens"/>
    <property type="evidence" value="ECO:0007669"/>
    <property type="project" value="UniProtKB-KW"/>
</dbReference>
<dbReference type="GO" id="GO:0001654">
    <property type="term" value="P:eye development"/>
    <property type="evidence" value="ECO:0000315"/>
    <property type="project" value="MGI"/>
</dbReference>
<dbReference type="GO" id="GO:0002088">
    <property type="term" value="P:lens development in camera-type eye"/>
    <property type="evidence" value="ECO:0000315"/>
    <property type="project" value="MGI"/>
</dbReference>
<dbReference type="FunFam" id="2.60.20.10:FF:000001">
    <property type="entry name" value="Crystallin gamma S"/>
    <property type="match status" value="1"/>
</dbReference>
<dbReference type="FunFam" id="2.60.20.10:FF:000003">
    <property type="entry name" value="Crystallin gamma S"/>
    <property type="match status" value="1"/>
</dbReference>
<dbReference type="Gene3D" id="2.60.20.10">
    <property type="entry name" value="Crystallins"/>
    <property type="match status" value="2"/>
</dbReference>
<dbReference type="InterPro" id="IPR050252">
    <property type="entry name" value="Beta/Gamma-Crystallin"/>
</dbReference>
<dbReference type="InterPro" id="IPR001064">
    <property type="entry name" value="Beta/gamma_crystallin"/>
</dbReference>
<dbReference type="InterPro" id="IPR011024">
    <property type="entry name" value="G_crystallin-like"/>
</dbReference>
<dbReference type="PANTHER" id="PTHR11818">
    <property type="entry name" value="BETA/GAMMA CRYSTALLIN"/>
    <property type="match status" value="1"/>
</dbReference>
<dbReference type="PANTHER" id="PTHR11818:SF123">
    <property type="entry name" value="GAMMA-CRYSTALLIN A"/>
    <property type="match status" value="1"/>
</dbReference>
<dbReference type="Pfam" id="PF00030">
    <property type="entry name" value="Crystall"/>
    <property type="match status" value="2"/>
</dbReference>
<dbReference type="PRINTS" id="PR01367">
    <property type="entry name" value="BGCRYSTALLIN"/>
</dbReference>
<dbReference type="SMART" id="SM00247">
    <property type="entry name" value="XTALbg"/>
    <property type="match status" value="2"/>
</dbReference>
<dbReference type="SUPFAM" id="SSF49695">
    <property type="entry name" value="gamma-Crystallin-like"/>
    <property type="match status" value="1"/>
</dbReference>
<dbReference type="PROSITE" id="PS50915">
    <property type="entry name" value="CRYSTALLIN_BETA_GAMMA"/>
    <property type="match status" value="4"/>
</dbReference>
<comment type="function">
    <text>Crystallins are the dominant structural components of the vertebrate eye lens.</text>
</comment>
<comment type="domain">
    <text>Has a two-domain beta-structure, folded into four very similar Greek key motifs.</text>
</comment>
<comment type="miscellaneous">
    <text>There are six different gamma crystallins identified in mouse lens.</text>
</comment>
<comment type="similarity">
    <text evidence="2">Belongs to the beta/gamma-crystallin family.</text>
</comment>
<accession>P04345</accession>
<keyword id="KW-0273">Eye lens protein</keyword>
<keyword id="KW-1185">Reference proteome</keyword>
<keyword id="KW-0677">Repeat</keyword>
<name>CRGA_MOUSE</name>
<feature type="chain" id="PRO_0000057595" description="Gamma-crystallin A">
    <location>
        <begin position="1"/>
        <end position="174"/>
    </location>
</feature>
<feature type="domain" description="Beta/gamma crystallin 'Greek key' 1" evidence="1">
    <location>
        <begin position="2"/>
        <end position="40"/>
    </location>
</feature>
<feature type="domain" description="Beta/gamma crystallin 'Greek key' 2" evidence="1">
    <location>
        <begin position="41"/>
        <end position="83"/>
    </location>
</feature>
<feature type="domain" description="Beta/gamma crystallin 'Greek key' 3" evidence="1">
    <location>
        <begin position="88"/>
        <end position="128"/>
    </location>
</feature>
<feature type="domain" description="Beta/gamma crystallin 'Greek key' 4" evidence="1">
    <location>
        <begin position="129"/>
        <end position="171"/>
    </location>
</feature>
<feature type="region of interest" description="Connecting peptide">
    <location>
        <begin position="84"/>
        <end position="87"/>
    </location>
</feature>